<feature type="chain" id="PRO_0000185092" description="Xaa-Pro dipeptidase">
    <location>
        <begin position="1"/>
        <end position="368"/>
    </location>
</feature>
<feature type="binding site" evidence="1">
    <location>
        <position position="223"/>
    </location>
    <ligand>
        <name>Mn(2+)</name>
        <dbReference type="ChEBI" id="CHEBI:29035"/>
        <label>2</label>
    </ligand>
</feature>
<feature type="binding site" evidence="1">
    <location>
        <position position="234"/>
    </location>
    <ligand>
        <name>Mn(2+)</name>
        <dbReference type="ChEBI" id="CHEBI:29035"/>
        <label>1</label>
    </ligand>
</feature>
<feature type="binding site" evidence="1">
    <location>
        <position position="234"/>
    </location>
    <ligand>
        <name>Mn(2+)</name>
        <dbReference type="ChEBI" id="CHEBI:29035"/>
        <label>2</label>
    </ligand>
</feature>
<feature type="binding site" evidence="1">
    <location>
        <position position="298"/>
    </location>
    <ligand>
        <name>Mn(2+)</name>
        <dbReference type="ChEBI" id="CHEBI:29035"/>
        <label>1</label>
    </ligand>
</feature>
<feature type="binding site" evidence="1">
    <location>
        <position position="327"/>
    </location>
    <ligand>
        <name>Mn(2+)</name>
        <dbReference type="ChEBI" id="CHEBI:29035"/>
        <label>1</label>
    </ligand>
</feature>
<feature type="binding site" evidence="1">
    <location>
        <position position="341"/>
    </location>
    <ligand>
        <name>Mn(2+)</name>
        <dbReference type="ChEBI" id="CHEBI:29035"/>
        <label>1</label>
    </ligand>
</feature>
<feature type="binding site" evidence="1">
    <location>
        <position position="341"/>
    </location>
    <ligand>
        <name>Mn(2+)</name>
        <dbReference type="ChEBI" id="CHEBI:29035"/>
        <label>2</label>
    </ligand>
</feature>
<keyword id="KW-0963">Cytoplasm</keyword>
<keyword id="KW-0224">Dipeptidase</keyword>
<keyword id="KW-0378">Hydrolase</keyword>
<keyword id="KW-0464">Manganese</keyword>
<keyword id="KW-0479">Metal-binding</keyword>
<keyword id="KW-0482">Metalloprotease</keyword>
<keyword id="KW-0645">Protease</keyword>
<dbReference type="EC" id="3.4.13.9"/>
<dbReference type="EMBL" id="AF012084">
    <property type="protein sequence ID" value="AAC24966.1"/>
    <property type="molecule type" value="Genomic_DNA"/>
</dbReference>
<dbReference type="RefSeq" id="WP_003627740.1">
    <property type="nucleotide sequence ID" value="NZ_SKBC01000068.1"/>
</dbReference>
<dbReference type="SMR" id="O84913"/>
<dbReference type="MEROPS" id="M24.006"/>
<dbReference type="eggNOG" id="COG0006">
    <property type="taxonomic scope" value="Bacteria"/>
</dbReference>
<dbReference type="GO" id="GO:0005737">
    <property type="term" value="C:cytoplasm"/>
    <property type="evidence" value="ECO:0007669"/>
    <property type="project" value="UniProtKB-SubCell"/>
</dbReference>
<dbReference type="GO" id="GO:0046872">
    <property type="term" value="F:metal ion binding"/>
    <property type="evidence" value="ECO:0007669"/>
    <property type="project" value="UniProtKB-KW"/>
</dbReference>
<dbReference type="GO" id="GO:0008237">
    <property type="term" value="F:metallopeptidase activity"/>
    <property type="evidence" value="ECO:0007669"/>
    <property type="project" value="UniProtKB-KW"/>
</dbReference>
<dbReference type="GO" id="GO:0102009">
    <property type="term" value="F:proline dipeptidase activity"/>
    <property type="evidence" value="ECO:0007669"/>
    <property type="project" value="UniProtKB-EC"/>
</dbReference>
<dbReference type="GO" id="GO:0006508">
    <property type="term" value="P:proteolysis"/>
    <property type="evidence" value="ECO:0007669"/>
    <property type="project" value="UniProtKB-KW"/>
</dbReference>
<dbReference type="CDD" id="cd01092">
    <property type="entry name" value="APP-like"/>
    <property type="match status" value="1"/>
</dbReference>
<dbReference type="Gene3D" id="3.90.230.10">
    <property type="entry name" value="Creatinase/methionine aminopeptidase superfamily"/>
    <property type="match status" value="1"/>
</dbReference>
<dbReference type="Gene3D" id="3.40.350.10">
    <property type="entry name" value="Creatinase/prolidase N-terminal domain"/>
    <property type="match status" value="1"/>
</dbReference>
<dbReference type="InterPro" id="IPR029149">
    <property type="entry name" value="Creatin/AminoP/Spt16_N"/>
</dbReference>
<dbReference type="InterPro" id="IPR036005">
    <property type="entry name" value="Creatinase/aminopeptidase-like"/>
</dbReference>
<dbReference type="InterPro" id="IPR000587">
    <property type="entry name" value="Creatinase_N"/>
</dbReference>
<dbReference type="InterPro" id="IPR000994">
    <property type="entry name" value="Pept_M24"/>
</dbReference>
<dbReference type="InterPro" id="IPR050659">
    <property type="entry name" value="Peptidase_M24B"/>
</dbReference>
<dbReference type="InterPro" id="IPR001131">
    <property type="entry name" value="Peptidase_M24B_aminopep-P_CS"/>
</dbReference>
<dbReference type="PANTHER" id="PTHR46112">
    <property type="entry name" value="AMINOPEPTIDASE"/>
    <property type="match status" value="1"/>
</dbReference>
<dbReference type="PANTHER" id="PTHR46112:SF10">
    <property type="entry name" value="DIPEPTIDASE YKVY-RELATED"/>
    <property type="match status" value="1"/>
</dbReference>
<dbReference type="Pfam" id="PF01321">
    <property type="entry name" value="Creatinase_N"/>
    <property type="match status" value="1"/>
</dbReference>
<dbReference type="Pfam" id="PF00557">
    <property type="entry name" value="Peptidase_M24"/>
    <property type="match status" value="1"/>
</dbReference>
<dbReference type="SUPFAM" id="SSF55920">
    <property type="entry name" value="Creatinase/aminopeptidase"/>
    <property type="match status" value="1"/>
</dbReference>
<dbReference type="SUPFAM" id="SSF53092">
    <property type="entry name" value="Creatinase/prolidase N-terminal domain"/>
    <property type="match status" value="1"/>
</dbReference>
<dbReference type="PROSITE" id="PS00491">
    <property type="entry name" value="PROLINE_PEPTIDASE"/>
    <property type="match status" value="1"/>
</dbReference>
<sequence length="368" mass="41238">MNLDKLQQWLQDSNNDIAYISNPITISYFTGYSMDPHERIFALLVFKDANPFIFCPALNVEEAKNSEWNGDVFGYLDSEDPWELIADNVRKRTSDTHTWAIEKDDLSVAHYQYLRGEFPNASFTNDVSSFIERLRLYKTPEEIKKLQGAGAEADFAFKIGFDAIRTGVTERSIAGQIDYQLKIQKGVMHESFETIVQAGKNAANPHLGPTMNTVQPNELVLFDLGTMHDGYASDSSRTVAYGTPSDKQREIYEVDREAQQAAIEAAKPGITAEELDSVARDIITKAGYGEYFIHRLGHGIGKNVHEYPSIVQGNDLVLEEGMCFSIEPGIYIPGFAGVRIEDCGVVTKDGFKTFTHTDKDLKIIPIRD</sequence>
<proteinExistence type="inferred from homology"/>
<evidence type="ECO:0000250" key="1"/>
<evidence type="ECO:0000305" key="2"/>
<reference key="1">
    <citation type="submission" date="1997-07" db="EMBL/GenBank/DDBJ databases">
        <authorList>
            <person name="Yuksel G.U."/>
            <person name="Steele J.L."/>
        </authorList>
    </citation>
    <scope>NUCLEOTIDE SEQUENCE [GENOMIC DNA]</scope>
    <source>
        <strain>CNRZ 32</strain>
    </source>
</reference>
<gene>
    <name type="primary">pepQ</name>
</gene>
<accession>O84913</accession>
<organism>
    <name type="scientific">Lactobacillus helveticus</name>
    <name type="common">Lactobacillus suntoryeus</name>
    <dbReference type="NCBI Taxonomy" id="1587"/>
    <lineage>
        <taxon>Bacteria</taxon>
        <taxon>Bacillati</taxon>
        <taxon>Bacillota</taxon>
        <taxon>Bacilli</taxon>
        <taxon>Lactobacillales</taxon>
        <taxon>Lactobacillaceae</taxon>
        <taxon>Lactobacillus</taxon>
    </lineage>
</organism>
<name>PEPQ_LACHE</name>
<protein>
    <recommendedName>
        <fullName>Xaa-Pro dipeptidase</fullName>
        <shortName>X-Pro dipeptidase</shortName>
        <ecNumber>3.4.13.9</ecNumber>
    </recommendedName>
    <alternativeName>
        <fullName>Imidodipeptidase</fullName>
    </alternativeName>
    <alternativeName>
        <fullName>Proline dipeptidase</fullName>
        <shortName>Prolidase</shortName>
    </alternativeName>
</protein>
<comment type="catalytic activity">
    <reaction>
        <text>Xaa-L-Pro dipeptide + H2O = an L-alpha-amino acid + L-proline</text>
        <dbReference type="Rhea" id="RHEA:76407"/>
        <dbReference type="ChEBI" id="CHEBI:15377"/>
        <dbReference type="ChEBI" id="CHEBI:59869"/>
        <dbReference type="ChEBI" id="CHEBI:60039"/>
        <dbReference type="ChEBI" id="CHEBI:195196"/>
        <dbReference type="EC" id="3.4.13.9"/>
    </reaction>
</comment>
<comment type="cofactor">
    <cofactor evidence="1">
        <name>Mn(2+)</name>
        <dbReference type="ChEBI" id="CHEBI:29035"/>
    </cofactor>
    <text evidence="1">Binds 2 manganese ions per subunit.</text>
</comment>
<comment type="subcellular location">
    <subcellularLocation>
        <location evidence="2">Cytoplasm</location>
    </subcellularLocation>
</comment>
<comment type="similarity">
    <text evidence="2">Belongs to the peptidase M24B family.</text>
</comment>